<organismHost>
    <name type="scientific">Escherichia coli</name>
    <dbReference type="NCBI Taxonomy" id="562"/>
</organismHost>
<accession>P18058</accession>
<comment type="function">
    <text>Inhibitor of the prohead protease gp21. Minor capsid protein.</text>
</comment>
<comment type="subcellular location">
    <subcellularLocation>
        <location evidence="1">Virion</location>
    </subcellularLocation>
</comment>
<sequence length="226" mass="25568">MIDKDYIAELKALDDNKEAKAKLAEYAEQFGIKVKKNKSFDNIVVDIEEALQKLASEPMPETDGLSIKDLIDAADAAEGLKYDDEEVNPEAALLIDSPIKSDIKIEVVETDKIPENTDVLIEDTPFVEEKFEQAVAEIIESEKPSVFTLPENFSPNLQLIGKNLGFCTVPWWIYQWIAETPDWKSHPTSFEHASAHQTLFSLIYYINRDGSVLIRETRNSSFVTLK</sequence>
<protein>
    <recommendedName>
        <fullName>Protein inh</fullName>
    </recommendedName>
    <alternativeName>
        <fullName>Inhibitor of prohead protease gp21</fullName>
    </alternativeName>
</protein>
<organism>
    <name type="scientific">Enterobacteria phage T4</name>
    <name type="common">Bacteriophage T4</name>
    <dbReference type="NCBI Taxonomy" id="10665"/>
    <lineage>
        <taxon>Viruses</taxon>
        <taxon>Duplodnaviria</taxon>
        <taxon>Heunggongvirae</taxon>
        <taxon>Uroviricota</taxon>
        <taxon>Caudoviricetes</taxon>
        <taxon>Straboviridae</taxon>
        <taxon>Tevenvirinae</taxon>
        <taxon>Tequatrovirus</taxon>
    </lineage>
</organism>
<evidence type="ECO:0000305" key="1"/>
<gene>
    <name type="primary">inh</name>
    <name type="synonym">hoc.1</name>
</gene>
<dbReference type="EMBL" id="X14869">
    <property type="protein sequence ID" value="CAA33012.1"/>
    <property type="molecule type" value="Genomic_DNA"/>
</dbReference>
<dbReference type="EMBL" id="AF158101">
    <property type="protein sequence ID" value="AAD42584.1"/>
    <property type="molecule type" value="Genomic_DNA"/>
</dbReference>
<dbReference type="PIR" id="JQ0567">
    <property type="entry name" value="S10496"/>
</dbReference>
<dbReference type="RefSeq" id="NP_049794.1">
    <property type="nucleotide sequence ID" value="NC_000866.4"/>
</dbReference>
<dbReference type="GeneID" id="1258560"/>
<dbReference type="KEGG" id="vg:1258560"/>
<dbReference type="OrthoDB" id="8009at10239"/>
<dbReference type="Proteomes" id="UP000009087">
    <property type="component" value="Segment"/>
</dbReference>
<dbReference type="GO" id="GO:0044423">
    <property type="term" value="C:virion component"/>
    <property type="evidence" value="ECO:0007669"/>
    <property type="project" value="UniProtKB-KW"/>
</dbReference>
<dbReference type="GO" id="GO:0030414">
    <property type="term" value="F:peptidase inhibitor activity"/>
    <property type="evidence" value="ECO:0007669"/>
    <property type="project" value="UniProtKB-KW"/>
</dbReference>
<dbReference type="InterPro" id="IPR016594">
    <property type="entry name" value="Phage_T4_inh"/>
</dbReference>
<dbReference type="PIRSF" id="PIRSF012159">
    <property type="entry name" value="Inh_gp21_prd"/>
    <property type="match status" value="1"/>
</dbReference>
<feature type="chain" id="PRO_0000164947" description="Protein inh">
    <location>
        <begin position="1"/>
        <end position="226"/>
    </location>
</feature>
<reference key="1">
    <citation type="journal article" date="1990" name="Nucleic Acids Res.">
        <title>The nucleotide sequence of the region of bacteriophage T4 inh(lip)-hoc genes.</title>
        <authorList>
            <person name="Kaliman A.V."/>
            <person name="Khasanova M.A."/>
            <person name="Kryukov V.M."/>
            <person name="Tanyashin V.I."/>
            <person name="Bayev A.A."/>
        </authorList>
    </citation>
    <scope>NUCLEOTIDE SEQUENCE [GENOMIC DNA]</scope>
</reference>
<reference key="2">
    <citation type="journal article" date="2003" name="Microbiol. Mol. Biol. Rev.">
        <title>Bacteriophage T4 genome.</title>
        <authorList>
            <person name="Miller E.S."/>
            <person name="Kutter E."/>
            <person name="Mosig G."/>
            <person name="Arisaka F."/>
            <person name="Kunisawa T."/>
            <person name="Ruger W."/>
        </authorList>
    </citation>
    <scope>NUCLEOTIDE SEQUENCE [LARGE SCALE GENOMIC DNA]</scope>
    <scope>REVIEW ON FUNCTION</scope>
</reference>
<proteinExistence type="predicted"/>
<keyword id="KW-0646">Protease inhibitor</keyword>
<keyword id="KW-1185">Reference proteome</keyword>
<keyword id="KW-0946">Virion</keyword>
<name>INH_BPT4</name>